<reference key="1">
    <citation type="journal article" date="2002" name="Nature">
        <title>The genome sequence of Schizosaccharomyces pombe.</title>
        <authorList>
            <person name="Wood V."/>
            <person name="Gwilliam R."/>
            <person name="Rajandream M.A."/>
            <person name="Lyne M.H."/>
            <person name="Lyne R."/>
            <person name="Stewart A."/>
            <person name="Sgouros J.G."/>
            <person name="Peat N."/>
            <person name="Hayles J."/>
            <person name="Baker S.G."/>
            <person name="Basham D."/>
            <person name="Bowman S."/>
            <person name="Brooks K."/>
            <person name="Brown D."/>
            <person name="Brown S."/>
            <person name="Chillingworth T."/>
            <person name="Churcher C.M."/>
            <person name="Collins M."/>
            <person name="Connor R."/>
            <person name="Cronin A."/>
            <person name="Davis P."/>
            <person name="Feltwell T."/>
            <person name="Fraser A."/>
            <person name="Gentles S."/>
            <person name="Goble A."/>
            <person name="Hamlin N."/>
            <person name="Harris D.E."/>
            <person name="Hidalgo J."/>
            <person name="Hodgson G."/>
            <person name="Holroyd S."/>
            <person name="Hornsby T."/>
            <person name="Howarth S."/>
            <person name="Huckle E.J."/>
            <person name="Hunt S."/>
            <person name="Jagels K."/>
            <person name="James K.D."/>
            <person name="Jones L."/>
            <person name="Jones M."/>
            <person name="Leather S."/>
            <person name="McDonald S."/>
            <person name="McLean J."/>
            <person name="Mooney P."/>
            <person name="Moule S."/>
            <person name="Mungall K.L."/>
            <person name="Murphy L.D."/>
            <person name="Niblett D."/>
            <person name="Odell C."/>
            <person name="Oliver K."/>
            <person name="O'Neil S."/>
            <person name="Pearson D."/>
            <person name="Quail M.A."/>
            <person name="Rabbinowitsch E."/>
            <person name="Rutherford K.M."/>
            <person name="Rutter S."/>
            <person name="Saunders D."/>
            <person name="Seeger K."/>
            <person name="Sharp S."/>
            <person name="Skelton J."/>
            <person name="Simmonds M.N."/>
            <person name="Squares R."/>
            <person name="Squares S."/>
            <person name="Stevens K."/>
            <person name="Taylor K."/>
            <person name="Taylor R.G."/>
            <person name="Tivey A."/>
            <person name="Walsh S.V."/>
            <person name="Warren T."/>
            <person name="Whitehead S."/>
            <person name="Woodward J.R."/>
            <person name="Volckaert G."/>
            <person name="Aert R."/>
            <person name="Robben J."/>
            <person name="Grymonprez B."/>
            <person name="Weltjens I."/>
            <person name="Vanstreels E."/>
            <person name="Rieger M."/>
            <person name="Schaefer M."/>
            <person name="Mueller-Auer S."/>
            <person name="Gabel C."/>
            <person name="Fuchs M."/>
            <person name="Duesterhoeft A."/>
            <person name="Fritzc C."/>
            <person name="Holzer E."/>
            <person name="Moestl D."/>
            <person name="Hilbert H."/>
            <person name="Borzym K."/>
            <person name="Langer I."/>
            <person name="Beck A."/>
            <person name="Lehrach H."/>
            <person name="Reinhardt R."/>
            <person name="Pohl T.M."/>
            <person name="Eger P."/>
            <person name="Zimmermann W."/>
            <person name="Wedler H."/>
            <person name="Wambutt R."/>
            <person name="Purnelle B."/>
            <person name="Goffeau A."/>
            <person name="Cadieu E."/>
            <person name="Dreano S."/>
            <person name="Gloux S."/>
            <person name="Lelaure V."/>
            <person name="Mottier S."/>
            <person name="Galibert F."/>
            <person name="Aves S.J."/>
            <person name="Xiang Z."/>
            <person name="Hunt C."/>
            <person name="Moore K."/>
            <person name="Hurst S.M."/>
            <person name="Lucas M."/>
            <person name="Rochet M."/>
            <person name="Gaillardin C."/>
            <person name="Tallada V.A."/>
            <person name="Garzon A."/>
            <person name="Thode G."/>
            <person name="Daga R.R."/>
            <person name="Cruzado L."/>
            <person name="Jimenez J."/>
            <person name="Sanchez M."/>
            <person name="del Rey F."/>
            <person name="Benito J."/>
            <person name="Dominguez A."/>
            <person name="Revuelta J.L."/>
            <person name="Moreno S."/>
            <person name="Armstrong J."/>
            <person name="Forsburg S.L."/>
            <person name="Cerutti L."/>
            <person name="Lowe T."/>
            <person name="McCombie W.R."/>
            <person name="Paulsen I."/>
            <person name="Potashkin J."/>
            <person name="Shpakovski G.V."/>
            <person name="Ussery D."/>
            <person name="Barrell B.G."/>
            <person name="Nurse P."/>
        </authorList>
    </citation>
    <scope>NUCLEOTIDE SEQUENCE [LARGE SCALE GENOMIC DNA]</scope>
    <source>
        <strain>972 / ATCC 24843</strain>
    </source>
</reference>
<accession>O74313</accession>
<name>YOG8_SCHPO</name>
<feature type="chain" id="PRO_0000303975" description="Putative uncharacterized protein C15D4.08c">
    <location>
        <begin position="1"/>
        <end position="138"/>
    </location>
</feature>
<feature type="region of interest" description="Disordered" evidence="1">
    <location>
        <begin position="1"/>
        <end position="23"/>
    </location>
</feature>
<feature type="region of interest" description="Disordered" evidence="1">
    <location>
        <begin position="35"/>
        <end position="83"/>
    </location>
</feature>
<feature type="compositionally biased region" description="Acidic residues" evidence="1">
    <location>
        <begin position="60"/>
        <end position="69"/>
    </location>
</feature>
<dbReference type="EMBL" id="CU329671">
    <property type="protein sequence ID" value="CAA20483.1"/>
    <property type="molecule type" value="Genomic_DNA"/>
</dbReference>
<dbReference type="PIR" id="T39484">
    <property type="entry name" value="T39484"/>
</dbReference>
<dbReference type="RefSeq" id="NP_596248.1">
    <property type="nucleotide sequence ID" value="NM_001022167.1"/>
</dbReference>
<dbReference type="SMR" id="O74313"/>
<dbReference type="BioGRID" id="276270">
    <property type="interactions" value="9"/>
</dbReference>
<dbReference type="iPTMnet" id="O74313"/>
<dbReference type="PaxDb" id="4896-SPBC15D4.08c.1"/>
<dbReference type="EnsemblFungi" id="SPBC15D4.08c.1">
    <property type="protein sequence ID" value="SPBC15D4.08c.1:pep"/>
    <property type="gene ID" value="SPBC15D4.08c"/>
</dbReference>
<dbReference type="KEGG" id="spo:2539717"/>
<dbReference type="PomBase" id="SPBC15D4.08c"/>
<dbReference type="VEuPathDB" id="FungiDB:SPBC15D4.08c"/>
<dbReference type="HOGENOM" id="CLU_1907894_0_0_1"/>
<dbReference type="InParanoid" id="O74313"/>
<dbReference type="OMA" id="LIESSCH"/>
<dbReference type="PRO" id="PR:O74313"/>
<dbReference type="Proteomes" id="UP000002485">
    <property type="component" value="Chromosome II"/>
</dbReference>
<gene>
    <name type="ORF">SPBC15D4.08c</name>
</gene>
<sequence length="138" mass="15717">MPESAPSTPPSVNRRHEPEMLSEYPSLMFEHSYLASPSSPIDQVHDELKHSQKRPRLTNDEETIPEEDDSTVRLTDSELEDPVSSNELIQTSCHLLTSVLTQLQTNLDKLKDSHQKALLRIQELEKKVSELSKNNKDS</sequence>
<proteinExistence type="predicted"/>
<protein>
    <recommendedName>
        <fullName>Putative uncharacterized protein C15D4.08c</fullName>
    </recommendedName>
</protein>
<keyword id="KW-1185">Reference proteome</keyword>
<organism>
    <name type="scientific">Schizosaccharomyces pombe (strain 972 / ATCC 24843)</name>
    <name type="common">Fission yeast</name>
    <dbReference type="NCBI Taxonomy" id="284812"/>
    <lineage>
        <taxon>Eukaryota</taxon>
        <taxon>Fungi</taxon>
        <taxon>Dikarya</taxon>
        <taxon>Ascomycota</taxon>
        <taxon>Taphrinomycotina</taxon>
        <taxon>Schizosaccharomycetes</taxon>
        <taxon>Schizosaccharomycetales</taxon>
        <taxon>Schizosaccharomycetaceae</taxon>
        <taxon>Schizosaccharomyces</taxon>
    </lineage>
</organism>
<evidence type="ECO:0000256" key="1">
    <source>
        <dbReference type="SAM" id="MobiDB-lite"/>
    </source>
</evidence>